<organism>
    <name type="scientific">Oryza sativa subsp. japonica</name>
    <name type="common">Rice</name>
    <dbReference type="NCBI Taxonomy" id="39947"/>
    <lineage>
        <taxon>Eukaryota</taxon>
        <taxon>Viridiplantae</taxon>
        <taxon>Streptophyta</taxon>
        <taxon>Embryophyta</taxon>
        <taxon>Tracheophyta</taxon>
        <taxon>Spermatophyta</taxon>
        <taxon>Magnoliopsida</taxon>
        <taxon>Liliopsida</taxon>
        <taxon>Poales</taxon>
        <taxon>Poaceae</taxon>
        <taxon>BOP clade</taxon>
        <taxon>Oryzoideae</taxon>
        <taxon>Oryzeae</taxon>
        <taxon>Oryzinae</taxon>
        <taxon>Oryza</taxon>
        <taxon>Oryza sativa</taxon>
    </lineage>
</organism>
<sequence>MANSASGMAVGDECKLKFQELKSKRSFRFITFKIDERTQQVVVDRLGQPGDTYDDFTASMPASECRYAVFDFDFVTDENCQKSKIFFISWSPDTSKVRSKMLYASSKDRFKRELDGIQVELQATDPSEMSMDIVKARAL</sequence>
<proteinExistence type="evidence at transcript level"/>
<evidence type="ECO:0000250" key="1"/>
<evidence type="ECO:0000255" key="2">
    <source>
        <dbReference type="PROSITE-ProRule" id="PRU00599"/>
    </source>
</evidence>
<evidence type="ECO:0000305" key="3"/>
<name>ADF6_ORYSJ</name>
<reference key="1">
    <citation type="journal article" date="2002" name="Nature">
        <title>Sequence and analysis of rice chromosome 4.</title>
        <authorList>
            <person name="Feng Q."/>
            <person name="Zhang Y."/>
            <person name="Hao P."/>
            <person name="Wang S."/>
            <person name="Fu G."/>
            <person name="Huang Y."/>
            <person name="Li Y."/>
            <person name="Zhu J."/>
            <person name="Liu Y."/>
            <person name="Hu X."/>
            <person name="Jia P."/>
            <person name="Zhang Y."/>
            <person name="Zhao Q."/>
            <person name="Ying K."/>
            <person name="Yu S."/>
            <person name="Tang Y."/>
            <person name="Weng Q."/>
            <person name="Zhang L."/>
            <person name="Lu Y."/>
            <person name="Mu J."/>
            <person name="Lu Y."/>
            <person name="Zhang L.S."/>
            <person name="Yu Z."/>
            <person name="Fan D."/>
            <person name="Liu X."/>
            <person name="Lu T."/>
            <person name="Li C."/>
            <person name="Wu Y."/>
            <person name="Sun T."/>
            <person name="Lei H."/>
            <person name="Li T."/>
            <person name="Hu H."/>
            <person name="Guan J."/>
            <person name="Wu M."/>
            <person name="Zhang R."/>
            <person name="Zhou B."/>
            <person name="Chen Z."/>
            <person name="Chen L."/>
            <person name="Jin Z."/>
            <person name="Wang R."/>
            <person name="Yin H."/>
            <person name="Cai Z."/>
            <person name="Ren S."/>
            <person name="Lv G."/>
            <person name="Gu W."/>
            <person name="Zhu G."/>
            <person name="Tu Y."/>
            <person name="Jia J."/>
            <person name="Zhang Y."/>
            <person name="Chen J."/>
            <person name="Kang H."/>
            <person name="Chen X."/>
            <person name="Shao C."/>
            <person name="Sun Y."/>
            <person name="Hu Q."/>
            <person name="Zhang X."/>
            <person name="Zhang W."/>
            <person name="Wang L."/>
            <person name="Ding C."/>
            <person name="Sheng H."/>
            <person name="Gu J."/>
            <person name="Chen S."/>
            <person name="Ni L."/>
            <person name="Zhu F."/>
            <person name="Chen W."/>
            <person name="Lan L."/>
            <person name="Lai Y."/>
            <person name="Cheng Z."/>
            <person name="Gu M."/>
            <person name="Jiang J."/>
            <person name="Li J."/>
            <person name="Hong G."/>
            <person name="Xue Y."/>
            <person name="Han B."/>
        </authorList>
    </citation>
    <scope>NUCLEOTIDE SEQUENCE [LARGE SCALE GENOMIC DNA]</scope>
    <source>
        <strain>cv. Nipponbare</strain>
    </source>
</reference>
<reference key="2">
    <citation type="journal article" date="2005" name="Nature">
        <title>The map-based sequence of the rice genome.</title>
        <authorList>
            <consortium name="International rice genome sequencing project (IRGSP)"/>
        </authorList>
    </citation>
    <scope>NUCLEOTIDE SEQUENCE [LARGE SCALE GENOMIC DNA]</scope>
    <source>
        <strain>cv. Nipponbare</strain>
    </source>
</reference>
<reference key="3">
    <citation type="journal article" date="2008" name="Nucleic Acids Res.">
        <title>The rice annotation project database (RAP-DB): 2008 update.</title>
        <authorList>
            <consortium name="The rice annotation project (RAP)"/>
        </authorList>
    </citation>
    <scope>GENOME REANNOTATION</scope>
    <source>
        <strain>cv. Nipponbare</strain>
    </source>
</reference>
<reference key="4">
    <citation type="journal article" date="2013" name="Rice">
        <title>Improvement of the Oryza sativa Nipponbare reference genome using next generation sequence and optical map data.</title>
        <authorList>
            <person name="Kawahara Y."/>
            <person name="de la Bastide M."/>
            <person name="Hamilton J.P."/>
            <person name="Kanamori H."/>
            <person name="McCombie W.R."/>
            <person name="Ouyang S."/>
            <person name="Schwartz D.C."/>
            <person name="Tanaka T."/>
            <person name="Wu J."/>
            <person name="Zhou S."/>
            <person name="Childs K.L."/>
            <person name="Davidson R.M."/>
            <person name="Lin H."/>
            <person name="Quesada-Ocampo L."/>
            <person name="Vaillancourt B."/>
            <person name="Sakai H."/>
            <person name="Lee S.S."/>
            <person name="Kim J."/>
            <person name="Numa H."/>
            <person name="Itoh T."/>
            <person name="Buell C.R."/>
            <person name="Matsumoto T."/>
        </authorList>
    </citation>
    <scope>GENOME REANNOTATION</scope>
    <source>
        <strain>cv. Nipponbare</strain>
    </source>
</reference>
<reference key="5">
    <citation type="journal article" date="2003" name="Science">
        <title>Collection, mapping, and annotation of over 28,000 cDNA clones from japonica rice.</title>
        <authorList>
            <consortium name="The rice full-length cDNA consortium"/>
        </authorList>
    </citation>
    <scope>NUCLEOTIDE SEQUENCE [LARGE SCALE MRNA]</scope>
    <source>
        <strain>cv. Nipponbare</strain>
    </source>
</reference>
<reference key="6">
    <citation type="journal article" date="2006" name="J. Plant Physiol.">
        <title>Comparative study of rice and Arabidopsis actin-depolymerizing factors gene families.</title>
        <authorList>
            <person name="Feng Y."/>
            <person name="Liu Q."/>
            <person name="Xue Q."/>
        </authorList>
    </citation>
    <scope>GENE FAMILY</scope>
</reference>
<accession>Q7XSN9</accession>
<accession>B7EG85</accession>
<dbReference type="EMBL" id="AL606647">
    <property type="protein sequence ID" value="CAE01864.2"/>
    <property type="molecule type" value="Genomic_DNA"/>
</dbReference>
<dbReference type="EMBL" id="AP008210">
    <property type="protein sequence ID" value="BAF15433.1"/>
    <property type="molecule type" value="Genomic_DNA"/>
</dbReference>
<dbReference type="EMBL" id="AP014960">
    <property type="protein sequence ID" value="BAS90426.1"/>
    <property type="molecule type" value="Genomic_DNA"/>
</dbReference>
<dbReference type="EMBL" id="AK069329">
    <property type="protein sequence ID" value="BAG91382.1"/>
    <property type="molecule type" value="mRNA"/>
</dbReference>
<dbReference type="RefSeq" id="XP_015637229.1">
    <property type="nucleotide sequence ID" value="XM_015781743.1"/>
</dbReference>
<dbReference type="SMR" id="Q7XSN9"/>
<dbReference type="FunCoup" id="Q7XSN9">
    <property type="interactions" value="2377"/>
</dbReference>
<dbReference type="STRING" id="39947.Q7XSN9"/>
<dbReference type="PaxDb" id="39947-Q7XSN9"/>
<dbReference type="EnsemblPlants" id="Os04t0555700-01">
    <property type="protein sequence ID" value="Os04t0555700-01"/>
    <property type="gene ID" value="Os04g0555700"/>
</dbReference>
<dbReference type="Gramene" id="Os04t0555700-01">
    <property type="protein sequence ID" value="Os04t0555700-01"/>
    <property type="gene ID" value="Os04g0555700"/>
</dbReference>
<dbReference type="KEGG" id="dosa:Os04g0555700"/>
<dbReference type="eggNOG" id="KOG1735">
    <property type="taxonomic scope" value="Eukaryota"/>
</dbReference>
<dbReference type="HOGENOM" id="CLU_094004_2_2_1"/>
<dbReference type="InParanoid" id="Q7XSN9"/>
<dbReference type="OMA" id="LKLCMLY"/>
<dbReference type="OrthoDB" id="3863715at2759"/>
<dbReference type="Proteomes" id="UP000000763">
    <property type="component" value="Chromosome 4"/>
</dbReference>
<dbReference type="Proteomes" id="UP000059680">
    <property type="component" value="Chromosome 4"/>
</dbReference>
<dbReference type="GO" id="GO:0015629">
    <property type="term" value="C:actin cytoskeleton"/>
    <property type="evidence" value="ECO:0000318"/>
    <property type="project" value="GO_Central"/>
</dbReference>
<dbReference type="GO" id="GO:0005737">
    <property type="term" value="C:cytoplasm"/>
    <property type="evidence" value="ECO:0000318"/>
    <property type="project" value="GO_Central"/>
</dbReference>
<dbReference type="GO" id="GO:0051015">
    <property type="term" value="F:actin filament binding"/>
    <property type="evidence" value="ECO:0000318"/>
    <property type="project" value="GO_Central"/>
</dbReference>
<dbReference type="GO" id="GO:0030042">
    <property type="term" value="P:actin filament depolymerization"/>
    <property type="evidence" value="ECO:0000318"/>
    <property type="project" value="GO_Central"/>
</dbReference>
<dbReference type="CDD" id="cd11286">
    <property type="entry name" value="ADF_cofilin_like"/>
    <property type="match status" value="1"/>
</dbReference>
<dbReference type="FunFam" id="3.40.20.10:FF:000025">
    <property type="entry name" value="Actin-depolymerizing factor 2"/>
    <property type="match status" value="1"/>
</dbReference>
<dbReference type="Gene3D" id="3.40.20.10">
    <property type="entry name" value="Severin"/>
    <property type="match status" value="1"/>
</dbReference>
<dbReference type="InterPro" id="IPR002108">
    <property type="entry name" value="ADF-H"/>
</dbReference>
<dbReference type="InterPro" id="IPR029006">
    <property type="entry name" value="ADF-H/Gelsolin-like_dom_sf"/>
</dbReference>
<dbReference type="InterPro" id="IPR017904">
    <property type="entry name" value="ADF/Cofilin"/>
</dbReference>
<dbReference type="PANTHER" id="PTHR11913">
    <property type="entry name" value="COFILIN-RELATED"/>
    <property type="match status" value="1"/>
</dbReference>
<dbReference type="Pfam" id="PF00241">
    <property type="entry name" value="Cofilin_ADF"/>
    <property type="match status" value="1"/>
</dbReference>
<dbReference type="SMART" id="SM00102">
    <property type="entry name" value="ADF"/>
    <property type="match status" value="1"/>
</dbReference>
<dbReference type="SUPFAM" id="SSF55753">
    <property type="entry name" value="Actin depolymerizing proteins"/>
    <property type="match status" value="1"/>
</dbReference>
<dbReference type="PROSITE" id="PS51263">
    <property type="entry name" value="ADF_H"/>
    <property type="match status" value="1"/>
</dbReference>
<comment type="function">
    <text evidence="1">Actin-depolymerizing protein. Severs actin filaments (F-actin) and binds to actin monomers (By similarity).</text>
</comment>
<comment type="similarity">
    <text evidence="3">Belongs to the actin-binding proteins ADF family.</text>
</comment>
<feature type="chain" id="PRO_0000278109" description="Actin-depolymerizing factor 6">
    <location>
        <begin position="1"/>
        <end position="139"/>
    </location>
</feature>
<feature type="domain" description="ADF-H" evidence="2">
    <location>
        <begin position="5"/>
        <end position="139"/>
    </location>
</feature>
<gene>
    <name type="primary">ADF6</name>
    <name type="ordered locus">Os04g0555700</name>
    <name type="ordered locus">LOC_Os04g46910</name>
    <name type="ORF">OSJNBb0012E24.5</name>
</gene>
<keyword id="KW-0009">Actin-binding</keyword>
<keyword id="KW-1185">Reference proteome</keyword>
<protein>
    <recommendedName>
        <fullName>Actin-depolymerizing factor 6</fullName>
        <shortName>ADF-6</shortName>
        <shortName>OsADF6</shortName>
    </recommendedName>
</protein>